<gene>
    <name evidence="1" type="primary">hisB</name>
    <name type="ordered locus">SaurJH9_2700</name>
</gene>
<reference key="1">
    <citation type="submission" date="2007-05" db="EMBL/GenBank/DDBJ databases">
        <title>Complete sequence of chromosome of Staphylococcus aureus subsp. aureus JH9.</title>
        <authorList>
            <consortium name="US DOE Joint Genome Institute"/>
            <person name="Copeland A."/>
            <person name="Lucas S."/>
            <person name="Lapidus A."/>
            <person name="Barry K."/>
            <person name="Detter J.C."/>
            <person name="Glavina del Rio T."/>
            <person name="Hammon N."/>
            <person name="Israni S."/>
            <person name="Pitluck S."/>
            <person name="Chain P."/>
            <person name="Malfatti S."/>
            <person name="Shin M."/>
            <person name="Vergez L."/>
            <person name="Schmutz J."/>
            <person name="Larimer F."/>
            <person name="Land M."/>
            <person name="Hauser L."/>
            <person name="Kyrpides N."/>
            <person name="Kim E."/>
            <person name="Tomasz A."/>
            <person name="Richardson P."/>
        </authorList>
    </citation>
    <scope>NUCLEOTIDE SEQUENCE [LARGE SCALE GENOMIC DNA]</scope>
    <source>
        <strain>JH9</strain>
    </source>
</reference>
<keyword id="KW-0028">Amino-acid biosynthesis</keyword>
<keyword id="KW-0963">Cytoplasm</keyword>
<keyword id="KW-0368">Histidine biosynthesis</keyword>
<keyword id="KW-0456">Lyase</keyword>
<organism>
    <name type="scientific">Staphylococcus aureus (strain JH9)</name>
    <dbReference type="NCBI Taxonomy" id="359786"/>
    <lineage>
        <taxon>Bacteria</taxon>
        <taxon>Bacillati</taxon>
        <taxon>Bacillota</taxon>
        <taxon>Bacilli</taxon>
        <taxon>Bacillales</taxon>
        <taxon>Staphylococcaceae</taxon>
        <taxon>Staphylococcus</taxon>
    </lineage>
</organism>
<accession>A5IWA3</accession>
<proteinExistence type="inferred from homology"/>
<evidence type="ECO:0000255" key="1">
    <source>
        <dbReference type="HAMAP-Rule" id="MF_00076"/>
    </source>
</evidence>
<sequence>MIYQKQRNTAETQLNISISDDQSPSHINTGVGFLNHMLTLFTFHSGLSLNIEAQGDIDVDDHHVTEDIGIVIGQLLLEMIKDKKHFVRYGTMYIPMDETLARVVVDISGRPYLSFNASLSKEKVGTFDTELVEEFFRAVVINARLTTHIDLIRGGNTHHEIEAIFKAFSRALGIALTATDDQRVPSSKGVIE</sequence>
<name>HIS7_STAA9</name>
<feature type="chain" id="PRO_1000075257" description="Imidazoleglycerol-phosphate dehydratase">
    <location>
        <begin position="1"/>
        <end position="192"/>
    </location>
</feature>
<dbReference type="EC" id="4.2.1.19" evidence="1"/>
<dbReference type="EMBL" id="CP000703">
    <property type="protein sequence ID" value="ABQ50476.1"/>
    <property type="molecule type" value="Genomic_DNA"/>
</dbReference>
<dbReference type="RefSeq" id="WP_000640266.1">
    <property type="nucleotide sequence ID" value="NC_009487.1"/>
</dbReference>
<dbReference type="SMR" id="A5IWA3"/>
<dbReference type="KEGG" id="saj:SaurJH9_2700"/>
<dbReference type="HOGENOM" id="CLU_044308_3_0_9"/>
<dbReference type="UniPathway" id="UPA00031">
    <property type="reaction ID" value="UER00011"/>
</dbReference>
<dbReference type="GO" id="GO:0005737">
    <property type="term" value="C:cytoplasm"/>
    <property type="evidence" value="ECO:0007669"/>
    <property type="project" value="UniProtKB-SubCell"/>
</dbReference>
<dbReference type="GO" id="GO:0004424">
    <property type="term" value="F:imidazoleglycerol-phosphate dehydratase activity"/>
    <property type="evidence" value="ECO:0007669"/>
    <property type="project" value="UniProtKB-UniRule"/>
</dbReference>
<dbReference type="GO" id="GO:0000105">
    <property type="term" value="P:L-histidine biosynthetic process"/>
    <property type="evidence" value="ECO:0007669"/>
    <property type="project" value="UniProtKB-UniRule"/>
</dbReference>
<dbReference type="CDD" id="cd07914">
    <property type="entry name" value="IGPD"/>
    <property type="match status" value="1"/>
</dbReference>
<dbReference type="FunFam" id="3.30.230.40:FF:000001">
    <property type="entry name" value="Imidazoleglycerol-phosphate dehydratase HisB"/>
    <property type="match status" value="1"/>
</dbReference>
<dbReference type="FunFam" id="3.30.230.40:FF:000003">
    <property type="entry name" value="Imidazoleglycerol-phosphate dehydratase HisB"/>
    <property type="match status" value="1"/>
</dbReference>
<dbReference type="Gene3D" id="3.30.230.40">
    <property type="entry name" value="Imidazole glycerol phosphate dehydratase, domain 1"/>
    <property type="match status" value="2"/>
</dbReference>
<dbReference type="HAMAP" id="MF_00076">
    <property type="entry name" value="HisB"/>
    <property type="match status" value="1"/>
</dbReference>
<dbReference type="InterPro" id="IPR038494">
    <property type="entry name" value="IGPD_sf"/>
</dbReference>
<dbReference type="InterPro" id="IPR000807">
    <property type="entry name" value="ImidazoleglycerolP_deHydtase"/>
</dbReference>
<dbReference type="InterPro" id="IPR020565">
    <property type="entry name" value="ImidazoleglycerP_deHydtase_CS"/>
</dbReference>
<dbReference type="InterPro" id="IPR020568">
    <property type="entry name" value="Ribosomal_Su5_D2-typ_SF"/>
</dbReference>
<dbReference type="NCBIfam" id="NF002107">
    <property type="entry name" value="PRK00951.1-2"/>
    <property type="match status" value="1"/>
</dbReference>
<dbReference type="NCBIfam" id="NF002111">
    <property type="entry name" value="PRK00951.2-1"/>
    <property type="match status" value="1"/>
</dbReference>
<dbReference type="NCBIfam" id="NF002114">
    <property type="entry name" value="PRK00951.2-4"/>
    <property type="match status" value="1"/>
</dbReference>
<dbReference type="PANTHER" id="PTHR23133:SF2">
    <property type="entry name" value="IMIDAZOLEGLYCEROL-PHOSPHATE DEHYDRATASE"/>
    <property type="match status" value="1"/>
</dbReference>
<dbReference type="PANTHER" id="PTHR23133">
    <property type="entry name" value="IMIDAZOLEGLYCEROL-PHOSPHATE DEHYDRATASE HIS7"/>
    <property type="match status" value="1"/>
</dbReference>
<dbReference type="Pfam" id="PF00475">
    <property type="entry name" value="IGPD"/>
    <property type="match status" value="1"/>
</dbReference>
<dbReference type="SUPFAM" id="SSF54211">
    <property type="entry name" value="Ribosomal protein S5 domain 2-like"/>
    <property type="match status" value="2"/>
</dbReference>
<dbReference type="PROSITE" id="PS00954">
    <property type="entry name" value="IGP_DEHYDRATASE_1"/>
    <property type="match status" value="1"/>
</dbReference>
<dbReference type="PROSITE" id="PS00955">
    <property type="entry name" value="IGP_DEHYDRATASE_2"/>
    <property type="match status" value="1"/>
</dbReference>
<protein>
    <recommendedName>
        <fullName evidence="1">Imidazoleglycerol-phosphate dehydratase</fullName>
        <shortName evidence="1">IGPD</shortName>
        <ecNumber evidence="1">4.2.1.19</ecNumber>
    </recommendedName>
</protein>
<comment type="catalytic activity">
    <reaction evidence="1">
        <text>D-erythro-1-(imidazol-4-yl)glycerol 3-phosphate = 3-(imidazol-4-yl)-2-oxopropyl phosphate + H2O</text>
        <dbReference type="Rhea" id="RHEA:11040"/>
        <dbReference type="ChEBI" id="CHEBI:15377"/>
        <dbReference type="ChEBI" id="CHEBI:57766"/>
        <dbReference type="ChEBI" id="CHEBI:58278"/>
        <dbReference type="EC" id="4.2.1.19"/>
    </reaction>
</comment>
<comment type="pathway">
    <text evidence="1">Amino-acid biosynthesis; L-histidine biosynthesis; L-histidine from 5-phospho-alpha-D-ribose 1-diphosphate: step 6/9.</text>
</comment>
<comment type="subcellular location">
    <subcellularLocation>
        <location evidence="1">Cytoplasm</location>
    </subcellularLocation>
</comment>
<comment type="similarity">
    <text evidence="1">Belongs to the imidazoleglycerol-phosphate dehydratase family.</text>
</comment>